<sequence length="369" mass="41222">MEMSSEQLNGSQVWVSSPFDLNGSLGPSNGSNQTEPYYDMTSNAVLTFIYFVVCVVGLCGNTLVIYVILRYAKMKTITNIYILNLAIADELFMLGLPFLAMQVALVHWPFGKAICRVVMTVDGINQFTSIFCLTVMSIDRYLAVVHPIKSAKWRRPRTAKMINVAVWCVSLLVILPIMIYAGLRSNQWGRSSCTINWPGESGAWYTGFIIYAFILGFLVPLTIICLCYLFIIIKVKSSGIRVGSSKRKKSEKKVTRMVSIVVAVFIFCWLPFYIFNVSSVSVAISPTPALKGMFDFVVILTYANSCANPILYAFLSDNFKKSFQNVLCLVKVSGTEDGERSDSKQDKSRLNETTETQRTLLNGDLQTSI</sequence>
<protein>
    <recommendedName>
        <fullName>Somatostatin receptor type 2</fullName>
        <shortName>SS-2-R</shortName>
        <shortName>SS2-R</shortName>
        <shortName>SS2R</shortName>
    </recommendedName>
    <alternativeName>
        <fullName>SRIF-1</fullName>
    </alternativeName>
</protein>
<name>SSR2_MOUSE</name>
<reference key="1">
    <citation type="journal article" date="1992" name="Proc. Natl. Acad. Sci. U.S.A.">
        <title>Cloning and functional characterization of a family of human and mouse somatostatin receptors expressed in brain, gastrointestinal tract, and kidney.</title>
        <authorList>
            <person name="Yamada Y."/>
            <person name="Post S.R."/>
            <person name="Wang K."/>
            <person name="Tager H.S."/>
            <person name="Bell G.I."/>
            <person name="Seino S."/>
        </authorList>
    </citation>
    <scope>NUCLEOTIDE SEQUENCE [GENOMIC DNA] (ISOFORM A)</scope>
</reference>
<reference key="2">
    <citation type="journal article" date="1992" name="FEBS Lett.">
        <title>Cloning and expression of a novel mouse somatostatin receptor (SSTR2B).</title>
        <authorList>
            <person name="Vanetti M."/>
            <person name="Kouba M."/>
            <person name="Wang X."/>
            <person name="Vogt G."/>
            <person name="Hoellt V."/>
        </authorList>
    </citation>
    <scope>NUCLEOTIDE SEQUENCE [GENOMIC DNA] (ISOFORM B)</scope>
</reference>
<reference key="3">
    <citation type="journal article" date="2001" name="J. Biol. Chem.">
        <title>Transcriptional activation of mouse sst2 somatostatin receptor promoter by transforming growth factor-beta. Involvement of Smad4.</title>
        <authorList>
            <person name="Puente E."/>
            <person name="Saint-Laurent N."/>
            <person name="Torrisani J."/>
            <person name="Furet C."/>
            <person name="Schally A.V."/>
            <person name="Vaysse N."/>
            <person name="Buscail L."/>
            <person name="Susini C."/>
        </authorList>
    </citation>
    <scope>NUCLEOTIDE SEQUENCE [GENOMIC DNA]</scope>
    <scope>ALTERNATIVE SPLICING (ISOFORMS A AND B)</scope>
    <source>
        <strain>129</strain>
        <tissue>Liver</tissue>
    </source>
</reference>
<reference key="4">
    <citation type="journal article" date="1994" name="J. Immunol.">
        <title>T lymphocytes isolated from the hepatic granulomas of schistosome-infected mice express somatostatin receptor subtype II (SSTR2) messenger RNA.</title>
        <authorList>
            <person name="Elliott D.E."/>
            <person name="Metwali A."/>
            <person name="Blum A.M."/>
            <person name="Sandor M."/>
            <person name="Lynch R."/>
            <person name="Weinstock J.V."/>
        </authorList>
    </citation>
    <scope>NUCLEOTIDE SEQUENCE [MRNA] OF 99-309 (ISOFORMS A/B)</scope>
</reference>
<reference key="5">
    <citation type="journal article" date="1993" name="FEBS Lett.">
        <title>The two isoforms of the mouse somatostatin receptor (mSSTR2A and mSSTR2B) differ in coupling efficiency to adenylate cyclase and in agonist-induced receptor desensitization.</title>
        <authorList>
            <person name="Vanetti M."/>
            <person name="Hoellt V."/>
        </authorList>
    </citation>
    <scope>FUNCTION</scope>
    <scope>SUBCELLULAR LOCATION</scope>
    <scope>ALTERNATIVE SPLICING (ISOFORMS A AND B)</scope>
</reference>
<reference key="6">
    <citation type="journal article" date="1998" name="J. Biol. Chem.">
        <title>sst2 somatostatin receptor mediates negative regulation of insulin receptor signaling through the tyrosine phosphatase SHP-1.</title>
        <authorList>
            <person name="Bousquet C."/>
            <person name="Delesque N."/>
            <person name="Lopez F."/>
            <person name="Saint-Laurent N."/>
            <person name="Esteve J.P."/>
            <person name="Bedecs K."/>
            <person name="Buscail L."/>
            <person name="Vaysse N."/>
            <person name="Susini C."/>
        </authorList>
    </citation>
    <scope>FUNCTION</scope>
</reference>
<feature type="chain" id="PRO_0000070121" description="Somatostatin receptor type 2">
    <location>
        <begin position="1"/>
        <end position="369"/>
    </location>
</feature>
<feature type="topological domain" description="Extracellular" evidence="3">
    <location>
        <begin position="1"/>
        <end position="43"/>
    </location>
</feature>
<feature type="transmembrane region" description="Helical; Name=1" evidence="3">
    <location>
        <begin position="44"/>
        <end position="67"/>
    </location>
</feature>
<feature type="topological domain" description="Cytoplasmic" evidence="3">
    <location>
        <begin position="68"/>
        <end position="78"/>
    </location>
</feature>
<feature type="transmembrane region" description="Helical; Name=2" evidence="3">
    <location>
        <begin position="79"/>
        <end position="103"/>
    </location>
</feature>
<feature type="topological domain" description="Extracellular" evidence="3">
    <location>
        <begin position="104"/>
        <end position="118"/>
    </location>
</feature>
<feature type="transmembrane region" description="Helical; Name=3" evidence="3">
    <location>
        <begin position="119"/>
        <end position="138"/>
    </location>
</feature>
<feature type="topological domain" description="Cytoplasmic" evidence="3">
    <location>
        <begin position="139"/>
        <end position="161"/>
    </location>
</feature>
<feature type="transmembrane region" description="Helical; Name=4" evidence="3">
    <location>
        <begin position="162"/>
        <end position="181"/>
    </location>
</feature>
<feature type="topological domain" description="Extracellular" evidence="3">
    <location>
        <begin position="182"/>
        <end position="207"/>
    </location>
</feature>
<feature type="transmembrane region" description="Helical; Name=5" evidence="3">
    <location>
        <begin position="208"/>
        <end position="229"/>
    </location>
</feature>
<feature type="topological domain" description="Cytoplasmic" evidence="3">
    <location>
        <begin position="230"/>
        <end position="253"/>
    </location>
</feature>
<feature type="transmembrane region" description="Helical; Name=6" evidence="3">
    <location>
        <begin position="254"/>
        <end position="278"/>
    </location>
</feature>
<feature type="topological domain" description="Extracellular" evidence="3">
    <location>
        <begin position="279"/>
        <end position="288"/>
    </location>
</feature>
<feature type="transmembrane region" description="Helical; Name=7" evidence="3">
    <location>
        <begin position="289"/>
        <end position="303"/>
    </location>
</feature>
<feature type="topological domain" description="Cytoplasmic" evidence="3">
    <location>
        <begin position="304"/>
        <end position="369"/>
    </location>
</feature>
<feature type="modified residue" description="Phosphoserine" evidence="2">
    <location>
        <position position="341"/>
    </location>
</feature>
<feature type="modified residue" description="Phosphoserine" evidence="2">
    <location>
        <position position="343"/>
    </location>
</feature>
<feature type="modified residue" description="Phosphoserine" evidence="2">
    <location>
        <position position="348"/>
    </location>
</feature>
<feature type="modified residue" description="Phosphothreonine" evidence="2">
    <location>
        <position position="353"/>
    </location>
</feature>
<feature type="modified residue" description="Phosphothreonine" evidence="2">
    <location>
        <position position="354"/>
    </location>
</feature>
<feature type="lipid moiety-binding region" description="S-palmitoyl cysteine" evidence="3">
    <location>
        <position position="328"/>
    </location>
</feature>
<feature type="glycosylation site" description="N-linked (GlcNAc...) asparagine" evidence="3">
    <location>
        <position position="9"/>
    </location>
</feature>
<feature type="glycosylation site" description="N-linked (GlcNAc...) asparagine" evidence="3">
    <location>
        <position position="22"/>
    </location>
</feature>
<feature type="glycosylation site" description="N-linked (GlcNAc...) asparagine" evidence="3">
    <location>
        <position position="29"/>
    </location>
</feature>
<feature type="glycosylation site" description="N-linked (GlcNAc...) asparagine" evidence="3">
    <location>
        <position position="32"/>
    </location>
</feature>
<feature type="disulfide bond" evidence="4">
    <location>
        <begin position="115"/>
        <end position="193"/>
    </location>
</feature>
<feature type="splice variant" id="VSP_001923" description="In isoform B." evidence="7">
    <original>VSGTEDGERSDSKQDKSRLNETTETQRTLLNGDLQTSI</original>
    <variation>ADNSQSGAEDIIAWV</variation>
    <location>
        <begin position="332"/>
        <end position="369"/>
    </location>
</feature>
<feature type="sequence conflict" description="In Ref. 2; CAA48766." evidence="7" ref="2">
    <original>I</original>
    <variation>L</variation>
    <location>
        <position position="179"/>
    </location>
</feature>
<feature type="sequence conflict" description="In Ref. 2; CAA48766." evidence="7" ref="2">
    <original>S</original>
    <variation>T</variation>
    <location>
        <position position="305"/>
    </location>
</feature>
<comment type="function">
    <text evidence="5 6">Receptor for somatostatin-14 and -28. This receptor is coupled via pertussis toxin sensitive G proteins to inhibition of adenylyl cyclase. In addition it stimulates phosphotyrosine phosphatase and PLC via pertussis toxin insensitive as well as sensitive G proteins. Inhibits calcium entry by suppressing voltage-dependent calcium channels. Acts as the functionally dominant somatostatin receptor in pancreatic alpha- and beta-cells where it mediates the inhibitory effect of somatostatin-14 on hormone secretion. Inhibits cell growth through enhancement of MAPK1 and MAPK2 phosphorylation and subsequent up-regulation of CDKN1B. Stimulates neuronal migration and axon outgrowth and may participate in neuron development and maturation during brain development. Mediates negative regulation of insulin receptor signaling through PTPN6. Inactivates SSTR3 receptor function following heterodimerization.</text>
</comment>
<comment type="subunit">
    <text evidence="1">Homodimer and heterodimer with SSTR3 and SSTR5. Heterodimerization with SSTR3 inactivates SSTR3 receptor function. Heterodimerization with SSTR5 is enhanced by agonist stimulation of SSTR2 and increases SSTR2 cell growth inhibition activity. Following agonist stimulation, homodimers dissociate into monomers which is required for receptor internalization. Interacts with beta-arrestin; this interaction is necessary for receptor internalization and is destabilized by heterodimerization with SSTR5 which results in increased recycling of SSTR2 to the cell surface. Interacts (via C-terminus) with SHANK1 (via PDZ domain) (By similarity).</text>
</comment>
<comment type="subcellular location">
    <subcellularLocation>
        <location evidence="5">Cell membrane</location>
        <topology evidence="5">Multi-pass membrane protein</topology>
    </subcellularLocation>
    <subcellularLocation>
        <location evidence="1">Cytoplasm</location>
    </subcellularLocation>
    <text evidence="1">Located mainly at the cell surface under basal conditions. Agonist stimulation results in internalization to the cytoplasm (By similarity).</text>
</comment>
<comment type="alternative products">
    <event type="alternative splicing"/>
    <isoform>
        <id>P30875-1</id>
        <name>A</name>
        <name>SS2RA</name>
        <sequence type="displayed"/>
    </isoform>
    <isoform>
        <id>P30875-2</id>
        <name>B</name>
        <name>SS2RB</name>
        <sequence type="described" ref="VSP_001923"/>
    </isoform>
</comment>
<comment type="tissue specificity">
    <text>Cerebrum and kidney.</text>
</comment>
<comment type="PTM">
    <text evidence="1">Phosphorylated on serine and threonine residues in response to agonist stimulation, leading to receptor desensitization and rapid internalization. Phosphorylated to a greater extent on serine than threonine residues. Threonine phosphorylation is required for arrestin binding and receptor endocytosis but is not necessary for desensitization (By similarity).</text>
</comment>
<comment type="similarity">
    <text evidence="4">Belongs to the G-protein coupled receptor 1 family.</text>
</comment>
<gene>
    <name type="primary">Sstr2</name>
    <name type="synonym">Smstr2</name>
    <name type="synonym">Sst2</name>
</gene>
<dbReference type="EMBL" id="M81832">
    <property type="protein sequence ID" value="AAA58256.1"/>
    <property type="molecule type" value="Genomic_DNA"/>
</dbReference>
<dbReference type="EMBL" id="X68951">
    <property type="protein sequence ID" value="CAA48766.1"/>
    <property type="molecule type" value="mRNA"/>
</dbReference>
<dbReference type="EMBL" id="AF008914">
    <property type="protein sequence ID" value="AAD01419.1"/>
    <property type="molecule type" value="Genomic_DNA"/>
</dbReference>
<dbReference type="EMBL" id="AF008914">
    <property type="protein sequence ID" value="AAD01420.1"/>
    <property type="molecule type" value="Genomic_DNA"/>
</dbReference>
<dbReference type="EMBL" id="S71756">
    <property type="protein sequence ID" value="AAP20804.1"/>
    <property type="molecule type" value="mRNA"/>
</dbReference>
<dbReference type="CCDS" id="CCDS25598.1">
    <molecule id="P30875-2"/>
</dbReference>
<dbReference type="CCDS" id="CCDS59571.1">
    <molecule id="P30875-1"/>
</dbReference>
<dbReference type="PIR" id="D41795">
    <property type="entry name" value="D41795"/>
</dbReference>
<dbReference type="PIR" id="S29248">
    <property type="entry name" value="S29248"/>
</dbReference>
<dbReference type="RefSeq" id="NP_001036071.1">
    <molecule id="P30875-1"/>
    <property type="nucleotide sequence ID" value="NM_001042606.3"/>
</dbReference>
<dbReference type="RefSeq" id="NP_033243.2">
    <molecule id="P30875-2"/>
    <property type="nucleotide sequence ID" value="NM_009217.5"/>
</dbReference>
<dbReference type="SMR" id="P30875"/>
<dbReference type="CORUM" id="P30875"/>
<dbReference type="FunCoup" id="P30875">
    <property type="interactions" value="1131"/>
</dbReference>
<dbReference type="IntAct" id="P30875">
    <property type="interactions" value="2"/>
</dbReference>
<dbReference type="MINT" id="P30875"/>
<dbReference type="STRING" id="10090.ENSMUSP00000138101"/>
<dbReference type="BindingDB" id="P30875"/>
<dbReference type="ChEMBL" id="CHEMBL3207"/>
<dbReference type="DrugCentral" id="P30875"/>
<dbReference type="GuidetoPHARMACOLOGY" id="356"/>
<dbReference type="GlyCosmos" id="P30875">
    <property type="glycosylation" value="4 sites, No reported glycans"/>
</dbReference>
<dbReference type="GlyGen" id="P30875">
    <property type="glycosylation" value="5 sites"/>
</dbReference>
<dbReference type="iPTMnet" id="P30875"/>
<dbReference type="PhosphoSitePlus" id="P30875"/>
<dbReference type="SwissPalm" id="P30875"/>
<dbReference type="PaxDb" id="10090-ENSMUSP00000138101"/>
<dbReference type="ProteomicsDB" id="257419">
    <molecule id="P30875-1"/>
</dbReference>
<dbReference type="ProteomicsDB" id="257420">
    <molecule id="P30875-2"/>
</dbReference>
<dbReference type="ABCD" id="P30875">
    <property type="antibodies" value="20 sequenced antibodies"/>
</dbReference>
<dbReference type="Antibodypedia" id="1548">
    <property type="antibodies" value="410 antibodies from 37 providers"/>
</dbReference>
<dbReference type="DNASU" id="20606"/>
<dbReference type="Ensembl" id="ENSMUST00000067591.3">
    <molecule id="P30875-2"/>
    <property type="protein sequence ID" value="ENSMUSP00000068578.3"/>
    <property type="gene ID" value="ENSMUSG00000047904.7"/>
</dbReference>
<dbReference type="Ensembl" id="ENSMUST00000106630.2">
    <molecule id="P30875-2"/>
    <property type="protein sequence ID" value="ENSMUSP00000102241.2"/>
    <property type="gene ID" value="ENSMUSG00000047904.7"/>
</dbReference>
<dbReference type="Ensembl" id="ENSMUST00000146390.3">
    <molecule id="P30875-1"/>
    <property type="protein sequence ID" value="ENSMUSP00000138101.2"/>
    <property type="gene ID" value="ENSMUSG00000047904.7"/>
</dbReference>
<dbReference type="GeneID" id="20606"/>
<dbReference type="KEGG" id="mmu:20606"/>
<dbReference type="UCSC" id="uc007mep.2">
    <molecule id="P30875-2"/>
    <property type="organism name" value="mouse"/>
</dbReference>
<dbReference type="UCSC" id="uc011yha.2">
    <molecule id="P30875-1"/>
    <property type="organism name" value="mouse"/>
</dbReference>
<dbReference type="AGR" id="MGI:98328"/>
<dbReference type="CTD" id="6752"/>
<dbReference type="MGI" id="MGI:98328">
    <property type="gene designation" value="Sstr2"/>
</dbReference>
<dbReference type="VEuPathDB" id="HostDB:ENSMUSG00000047904"/>
<dbReference type="eggNOG" id="KOG3656">
    <property type="taxonomic scope" value="Eukaryota"/>
</dbReference>
<dbReference type="GeneTree" id="ENSGT00940000156544"/>
<dbReference type="HOGENOM" id="CLU_009579_8_1_1"/>
<dbReference type="InParanoid" id="P30875"/>
<dbReference type="OMA" id="LNGSHAW"/>
<dbReference type="OrthoDB" id="6076970at2759"/>
<dbReference type="PhylomeDB" id="P30875"/>
<dbReference type="TreeFam" id="TF315737"/>
<dbReference type="Reactome" id="R-MMU-375276">
    <property type="pathway name" value="Peptide ligand-binding receptors"/>
</dbReference>
<dbReference type="Reactome" id="R-MMU-418594">
    <property type="pathway name" value="G alpha (i) signalling events"/>
</dbReference>
<dbReference type="BioGRID-ORCS" id="20606">
    <property type="hits" value="3 hits in 75 CRISPR screens"/>
</dbReference>
<dbReference type="ChiTaRS" id="Sstr2">
    <property type="organism name" value="mouse"/>
</dbReference>
<dbReference type="PRO" id="PR:P30875"/>
<dbReference type="Proteomes" id="UP000000589">
    <property type="component" value="Chromosome 11"/>
</dbReference>
<dbReference type="RNAct" id="P30875">
    <property type="molecule type" value="protein"/>
</dbReference>
<dbReference type="Bgee" id="ENSMUSG00000047904">
    <property type="expression patterns" value="Expressed in skin of snout and 116 other cell types or tissues"/>
</dbReference>
<dbReference type="GO" id="GO:0005829">
    <property type="term" value="C:cytosol"/>
    <property type="evidence" value="ECO:0007669"/>
    <property type="project" value="Ensembl"/>
</dbReference>
<dbReference type="GO" id="GO:0016020">
    <property type="term" value="C:membrane"/>
    <property type="evidence" value="ECO:0000314"/>
    <property type="project" value="MGI"/>
</dbReference>
<dbReference type="GO" id="GO:0005654">
    <property type="term" value="C:nucleoplasm"/>
    <property type="evidence" value="ECO:0007669"/>
    <property type="project" value="Ensembl"/>
</dbReference>
<dbReference type="GO" id="GO:0005886">
    <property type="term" value="C:plasma membrane"/>
    <property type="evidence" value="ECO:0000314"/>
    <property type="project" value="MGI"/>
</dbReference>
<dbReference type="GO" id="GO:0030165">
    <property type="term" value="F:PDZ domain binding"/>
    <property type="evidence" value="ECO:0007669"/>
    <property type="project" value="Ensembl"/>
</dbReference>
<dbReference type="GO" id="GO:0004994">
    <property type="term" value="F:somatostatin receptor activity"/>
    <property type="evidence" value="ECO:0000314"/>
    <property type="project" value="MGI"/>
</dbReference>
<dbReference type="GO" id="GO:0007193">
    <property type="term" value="P:adenylate cyclase-inhibiting G protein-coupled receptor signaling pathway"/>
    <property type="evidence" value="ECO:0000314"/>
    <property type="project" value="MGI"/>
</dbReference>
<dbReference type="GO" id="GO:0007186">
    <property type="term" value="P:G protein-coupled receptor signaling pathway"/>
    <property type="evidence" value="ECO:0000315"/>
    <property type="project" value="MGI"/>
</dbReference>
<dbReference type="GO" id="GO:0007218">
    <property type="term" value="P:neuropeptide signaling pathway"/>
    <property type="evidence" value="ECO:0000314"/>
    <property type="project" value="MGI"/>
</dbReference>
<dbReference type="CDD" id="cd15971">
    <property type="entry name" value="7tmA_SSTR2"/>
    <property type="match status" value="1"/>
</dbReference>
<dbReference type="FunFam" id="1.20.1070.10:FF:000039">
    <property type="entry name" value="somatostatin receptor type 2"/>
    <property type="match status" value="1"/>
</dbReference>
<dbReference type="Gene3D" id="1.20.1070.10">
    <property type="entry name" value="Rhodopsin 7-helix transmembrane proteins"/>
    <property type="match status" value="1"/>
</dbReference>
<dbReference type="InterPro" id="IPR000276">
    <property type="entry name" value="GPCR_Rhodpsn"/>
</dbReference>
<dbReference type="InterPro" id="IPR017452">
    <property type="entry name" value="GPCR_Rhodpsn_7TM"/>
</dbReference>
<dbReference type="InterPro" id="IPR000586">
    <property type="entry name" value="Somatstn_rcpt"/>
</dbReference>
<dbReference type="InterPro" id="IPR002074">
    <property type="entry name" value="Somatstn_rcpt_2"/>
</dbReference>
<dbReference type="PANTHER" id="PTHR24229">
    <property type="entry name" value="NEUROPEPTIDES RECEPTOR"/>
    <property type="match status" value="1"/>
</dbReference>
<dbReference type="PANTHER" id="PTHR24229:SF6">
    <property type="entry name" value="SOMATOSTATIN RECEPTOR TYPE 2"/>
    <property type="match status" value="1"/>
</dbReference>
<dbReference type="Pfam" id="PF00001">
    <property type="entry name" value="7tm_1"/>
    <property type="match status" value="1"/>
</dbReference>
<dbReference type="PRINTS" id="PR00237">
    <property type="entry name" value="GPCRRHODOPSN"/>
</dbReference>
<dbReference type="PRINTS" id="PR00246">
    <property type="entry name" value="SOMATOSTATNR"/>
</dbReference>
<dbReference type="PRINTS" id="PR00588">
    <property type="entry name" value="SOMATOSTTN2R"/>
</dbReference>
<dbReference type="SMART" id="SM01381">
    <property type="entry name" value="7TM_GPCR_Srsx"/>
    <property type="match status" value="1"/>
</dbReference>
<dbReference type="SUPFAM" id="SSF81321">
    <property type="entry name" value="Family A G protein-coupled receptor-like"/>
    <property type="match status" value="1"/>
</dbReference>
<dbReference type="PROSITE" id="PS00237">
    <property type="entry name" value="G_PROTEIN_RECEP_F1_1"/>
    <property type="match status" value="1"/>
</dbReference>
<dbReference type="PROSITE" id="PS50262">
    <property type="entry name" value="G_PROTEIN_RECEP_F1_2"/>
    <property type="match status" value="1"/>
</dbReference>
<organism>
    <name type="scientific">Mus musculus</name>
    <name type="common">Mouse</name>
    <dbReference type="NCBI Taxonomy" id="10090"/>
    <lineage>
        <taxon>Eukaryota</taxon>
        <taxon>Metazoa</taxon>
        <taxon>Chordata</taxon>
        <taxon>Craniata</taxon>
        <taxon>Vertebrata</taxon>
        <taxon>Euteleostomi</taxon>
        <taxon>Mammalia</taxon>
        <taxon>Eutheria</taxon>
        <taxon>Euarchontoglires</taxon>
        <taxon>Glires</taxon>
        <taxon>Rodentia</taxon>
        <taxon>Myomorpha</taxon>
        <taxon>Muroidea</taxon>
        <taxon>Muridae</taxon>
        <taxon>Murinae</taxon>
        <taxon>Mus</taxon>
        <taxon>Mus</taxon>
    </lineage>
</organism>
<evidence type="ECO:0000250" key="1"/>
<evidence type="ECO:0000250" key="2">
    <source>
        <dbReference type="UniProtKB" id="P30680"/>
    </source>
</evidence>
<evidence type="ECO:0000255" key="3"/>
<evidence type="ECO:0000255" key="4">
    <source>
        <dbReference type="PROSITE-ProRule" id="PRU00521"/>
    </source>
</evidence>
<evidence type="ECO:0000269" key="5">
    <source>
    </source>
</evidence>
<evidence type="ECO:0000269" key="6">
    <source>
    </source>
</evidence>
<evidence type="ECO:0000305" key="7"/>
<proteinExistence type="evidence at transcript level"/>
<keyword id="KW-0025">Alternative splicing</keyword>
<keyword id="KW-1003">Cell membrane</keyword>
<keyword id="KW-0963">Cytoplasm</keyword>
<keyword id="KW-1015">Disulfide bond</keyword>
<keyword id="KW-0297">G-protein coupled receptor</keyword>
<keyword id="KW-0325">Glycoprotein</keyword>
<keyword id="KW-0449">Lipoprotein</keyword>
<keyword id="KW-0472">Membrane</keyword>
<keyword id="KW-0564">Palmitate</keyword>
<keyword id="KW-0597">Phosphoprotein</keyword>
<keyword id="KW-0675">Receptor</keyword>
<keyword id="KW-1185">Reference proteome</keyword>
<keyword id="KW-0807">Transducer</keyword>
<keyword id="KW-0812">Transmembrane</keyword>
<keyword id="KW-1133">Transmembrane helix</keyword>
<accession>P30875</accession>
<accession>P30934</accession>
<accession>Q91Y73</accession>